<organism>
    <name type="scientific">Saccharomyces cerevisiae (strain ATCC 204508 / S288c)</name>
    <name type="common">Baker's yeast</name>
    <dbReference type="NCBI Taxonomy" id="559292"/>
    <lineage>
        <taxon>Eukaryota</taxon>
        <taxon>Fungi</taxon>
        <taxon>Dikarya</taxon>
        <taxon>Ascomycota</taxon>
        <taxon>Saccharomycotina</taxon>
        <taxon>Saccharomycetes</taxon>
        <taxon>Saccharomycetales</taxon>
        <taxon>Saccharomycetaceae</taxon>
        <taxon>Saccharomyces</taxon>
    </lineage>
</organism>
<comment type="subcellular location">
    <subcellularLocation>
        <location evidence="2">Membrane</location>
        <topology evidence="2">Multi-pass membrane protein</topology>
    </subcellularLocation>
</comment>
<comment type="caution">
    <text evidence="3">Product of a dubious gene prediction unlikely to encode a functional protein. Because of that it is not part of the S.cerevisiae S288c complete/reference proteome set.</text>
</comment>
<comment type="sequence caution" evidence="2">
    <conflict type="frameshift">
        <sequence resource="EMBL-CDS" id="CAA96743"/>
    </conflict>
</comment>
<feature type="chain" id="PRO_0000202771" description="Putative uncharacterized protein YGL041C">
    <location>
        <begin position="1"/>
        <end position="67"/>
    </location>
</feature>
<feature type="transmembrane region" description="Helical" evidence="1">
    <location>
        <begin position="13"/>
        <end position="32"/>
    </location>
</feature>
<feature type="transmembrane region" description="Helical" evidence="1">
    <location>
        <begin position="42"/>
        <end position="64"/>
    </location>
</feature>
<dbReference type="EMBL" id="Z72563">
    <property type="protein sequence ID" value="CAA96743.1"/>
    <property type="status" value="ALT_FRAME"/>
    <property type="molecule type" value="Genomic_DNA"/>
</dbReference>
<dbReference type="PIR" id="S64045">
    <property type="entry name" value="S64045"/>
</dbReference>
<dbReference type="STRING" id="4932.YGL041C"/>
<dbReference type="PaxDb" id="4932-YGL041C"/>
<dbReference type="EnsemblFungi" id="YGL041C_mRNA">
    <property type="protein sequence ID" value="YGL041C"/>
    <property type="gene ID" value="YGL041C"/>
</dbReference>
<dbReference type="AGR" id="SGD:S000003009"/>
<dbReference type="SGD" id="S000003009">
    <property type="gene designation" value="YGL041C"/>
</dbReference>
<dbReference type="HOGENOM" id="CLU_187868_0_0_1"/>
<dbReference type="GO" id="GO:0016020">
    <property type="term" value="C:membrane"/>
    <property type="evidence" value="ECO:0007669"/>
    <property type="project" value="UniProtKB-SubCell"/>
</dbReference>
<reference key="1">
    <citation type="journal article" date="1997" name="Yeast">
        <title>The characterization of two new clusters of duplicated genes suggests a 'Lego' organization of the yeast Saccharomyces cerevisiae chromosomes.</title>
        <authorList>
            <person name="Feuermann M."/>
            <person name="de Montigny J."/>
            <person name="Potier S."/>
            <person name="Souciet J.-L."/>
        </authorList>
    </citation>
    <scope>NUCLEOTIDE SEQUENCE [GENOMIC DNA]</scope>
    <source>
        <strain>ATCC 204508 / S288c</strain>
    </source>
</reference>
<reference key="2">
    <citation type="journal article" date="1997" name="Nature">
        <title>The nucleotide sequence of Saccharomyces cerevisiae chromosome VII.</title>
        <authorList>
            <person name="Tettelin H."/>
            <person name="Agostoni-Carbone M.L."/>
            <person name="Albermann K."/>
            <person name="Albers M."/>
            <person name="Arroyo J."/>
            <person name="Backes U."/>
            <person name="Barreiros T."/>
            <person name="Bertani I."/>
            <person name="Bjourson A.J."/>
            <person name="Brueckner M."/>
            <person name="Bruschi C.V."/>
            <person name="Carignani G."/>
            <person name="Castagnoli L."/>
            <person name="Cerdan E."/>
            <person name="Clemente M.L."/>
            <person name="Coblenz A."/>
            <person name="Coglievina M."/>
            <person name="Coissac E."/>
            <person name="Defoor E."/>
            <person name="Del Bino S."/>
            <person name="Delius H."/>
            <person name="Delneri D."/>
            <person name="de Wergifosse P."/>
            <person name="Dujon B."/>
            <person name="Durand P."/>
            <person name="Entian K.-D."/>
            <person name="Eraso P."/>
            <person name="Escribano V."/>
            <person name="Fabiani L."/>
            <person name="Fartmann B."/>
            <person name="Feroli F."/>
            <person name="Feuermann M."/>
            <person name="Frontali L."/>
            <person name="Garcia-Gonzalez M."/>
            <person name="Garcia-Saez M.I."/>
            <person name="Goffeau A."/>
            <person name="Guerreiro P."/>
            <person name="Hani J."/>
            <person name="Hansen M."/>
            <person name="Hebling U."/>
            <person name="Hernandez K."/>
            <person name="Heumann K."/>
            <person name="Hilger F."/>
            <person name="Hofmann B."/>
            <person name="Indge K.J."/>
            <person name="James C.M."/>
            <person name="Klima R."/>
            <person name="Koetter P."/>
            <person name="Kramer B."/>
            <person name="Kramer W."/>
            <person name="Lauquin G."/>
            <person name="Leuther H."/>
            <person name="Louis E.J."/>
            <person name="Maillier E."/>
            <person name="Marconi A."/>
            <person name="Martegani E."/>
            <person name="Mazon M.J."/>
            <person name="Mazzoni C."/>
            <person name="McReynolds A.D.K."/>
            <person name="Melchioretto P."/>
            <person name="Mewes H.-W."/>
            <person name="Minenkova O."/>
            <person name="Mueller-Auer S."/>
            <person name="Nawrocki A."/>
            <person name="Netter P."/>
            <person name="Neu R."/>
            <person name="Nombela C."/>
            <person name="Oliver S.G."/>
            <person name="Panzeri L."/>
            <person name="Paoluzi S."/>
            <person name="Plevani P."/>
            <person name="Portetelle D."/>
            <person name="Portillo F."/>
            <person name="Potier S."/>
            <person name="Purnelle B."/>
            <person name="Rieger M."/>
            <person name="Riles L."/>
            <person name="Rinaldi T."/>
            <person name="Robben J."/>
            <person name="Rodrigues-Pousada C."/>
            <person name="Rodriguez-Belmonte E."/>
            <person name="Rodriguez-Torres A.M."/>
            <person name="Rose M."/>
            <person name="Ruzzi M."/>
            <person name="Saliola M."/>
            <person name="Sanchez-Perez M."/>
            <person name="Schaefer B."/>
            <person name="Schaefer M."/>
            <person name="Scharfe M."/>
            <person name="Schmidheini T."/>
            <person name="Schreer A."/>
            <person name="Skala J."/>
            <person name="Souciet J.-L."/>
            <person name="Steensma H.Y."/>
            <person name="Talla E."/>
            <person name="Thierry A."/>
            <person name="Vandenbol M."/>
            <person name="van der Aart Q.J.M."/>
            <person name="Van Dyck L."/>
            <person name="Vanoni M."/>
            <person name="Verhasselt P."/>
            <person name="Voet M."/>
            <person name="Volckaert G."/>
            <person name="Wambutt R."/>
            <person name="Watson M.D."/>
            <person name="Weber N."/>
            <person name="Wedler E."/>
            <person name="Wedler H."/>
            <person name="Wipfli P."/>
            <person name="Wolf K."/>
            <person name="Wright L.F."/>
            <person name="Zaccaria P."/>
            <person name="Zimmermann M."/>
            <person name="Zollner A."/>
            <person name="Kleine K."/>
        </authorList>
    </citation>
    <scope>NUCLEOTIDE SEQUENCE [LARGE SCALE GENOMIC DNA]</scope>
    <source>
        <strain>ATCC 204508 / S288c</strain>
    </source>
</reference>
<reference key="3">
    <citation type="journal article" date="2014" name="G3 (Bethesda)">
        <title>The reference genome sequence of Saccharomyces cerevisiae: Then and now.</title>
        <authorList>
            <person name="Engel S.R."/>
            <person name="Dietrich F.S."/>
            <person name="Fisk D.G."/>
            <person name="Binkley G."/>
            <person name="Balakrishnan R."/>
            <person name="Costanzo M.C."/>
            <person name="Dwight S.S."/>
            <person name="Hitz B.C."/>
            <person name="Karra K."/>
            <person name="Nash R.S."/>
            <person name="Weng S."/>
            <person name="Wong E.D."/>
            <person name="Lloyd P."/>
            <person name="Skrzypek M.S."/>
            <person name="Miyasato S.R."/>
            <person name="Simison M."/>
            <person name="Cherry J.M."/>
        </authorList>
    </citation>
    <scope>GENOME REANNOTATION</scope>
    <scope>SEQUENCE REVISION TO 60</scope>
    <source>
        <strain>ATCC 204508 / S288c</strain>
    </source>
</reference>
<keyword id="KW-0472">Membrane</keyword>
<keyword id="KW-0812">Transmembrane</keyword>
<keyword id="KW-1133">Transmembrane helix</keyword>
<protein>
    <recommendedName>
        <fullName>Putative uncharacterized protein YGL041C</fullName>
    </recommendedName>
</protein>
<sequence length="67" mass="7549">MPDFSNSNLNSFIACLRSLSIKILIICHGFIVFSSLAEVPSRLTNFFSIMILLTFSNFSRTLGLEFI</sequence>
<accession>P53182</accession>
<name>YGE1_YEAST</name>
<gene>
    <name type="ordered locus">YGL041C</name>
</gene>
<evidence type="ECO:0000255" key="1"/>
<evidence type="ECO:0000305" key="2"/>
<evidence type="ECO:0000305" key="3">
    <source>
    </source>
</evidence>
<proteinExistence type="uncertain"/>